<dbReference type="EMBL" id="AY926410">
    <property type="protein sequence ID" value="AAY23253.1"/>
    <property type="molecule type" value="Genomic_DNA"/>
</dbReference>
<dbReference type="SMR" id="Q508J3"/>
<dbReference type="GO" id="GO:0005743">
    <property type="term" value="C:mitochondrial inner membrane"/>
    <property type="evidence" value="ECO:0007669"/>
    <property type="project" value="UniProtKB-SubCell"/>
</dbReference>
<dbReference type="GO" id="GO:0045275">
    <property type="term" value="C:respiratory chain complex III"/>
    <property type="evidence" value="ECO:0007669"/>
    <property type="project" value="InterPro"/>
</dbReference>
<dbReference type="GO" id="GO:0046872">
    <property type="term" value="F:metal ion binding"/>
    <property type="evidence" value="ECO:0007669"/>
    <property type="project" value="UniProtKB-KW"/>
</dbReference>
<dbReference type="GO" id="GO:0008121">
    <property type="term" value="F:ubiquinol-cytochrome-c reductase activity"/>
    <property type="evidence" value="ECO:0007669"/>
    <property type="project" value="InterPro"/>
</dbReference>
<dbReference type="GO" id="GO:0006122">
    <property type="term" value="P:mitochondrial electron transport, ubiquinol to cytochrome c"/>
    <property type="evidence" value="ECO:0007669"/>
    <property type="project" value="TreeGrafter"/>
</dbReference>
<dbReference type="CDD" id="cd00290">
    <property type="entry name" value="cytochrome_b_C"/>
    <property type="match status" value="1"/>
</dbReference>
<dbReference type="CDD" id="cd00284">
    <property type="entry name" value="Cytochrome_b_N"/>
    <property type="match status" value="1"/>
</dbReference>
<dbReference type="FunFam" id="1.20.810.10:FF:000002">
    <property type="entry name" value="Cytochrome b"/>
    <property type="match status" value="1"/>
</dbReference>
<dbReference type="Gene3D" id="1.20.810.10">
    <property type="entry name" value="Cytochrome Bc1 Complex, Chain C"/>
    <property type="match status" value="1"/>
</dbReference>
<dbReference type="InterPro" id="IPR005798">
    <property type="entry name" value="Cyt_b/b6_C"/>
</dbReference>
<dbReference type="InterPro" id="IPR036150">
    <property type="entry name" value="Cyt_b/b6_C_sf"/>
</dbReference>
<dbReference type="InterPro" id="IPR005797">
    <property type="entry name" value="Cyt_b/b6_N"/>
</dbReference>
<dbReference type="InterPro" id="IPR027387">
    <property type="entry name" value="Cytb/b6-like_sf"/>
</dbReference>
<dbReference type="InterPro" id="IPR030689">
    <property type="entry name" value="Cytochrome_b"/>
</dbReference>
<dbReference type="InterPro" id="IPR048260">
    <property type="entry name" value="Cytochrome_b_C_euk/bac"/>
</dbReference>
<dbReference type="InterPro" id="IPR048259">
    <property type="entry name" value="Cytochrome_b_N_euk/bac"/>
</dbReference>
<dbReference type="InterPro" id="IPR016174">
    <property type="entry name" value="Di-haem_cyt_TM"/>
</dbReference>
<dbReference type="PANTHER" id="PTHR19271">
    <property type="entry name" value="CYTOCHROME B"/>
    <property type="match status" value="1"/>
</dbReference>
<dbReference type="PANTHER" id="PTHR19271:SF16">
    <property type="entry name" value="CYTOCHROME B"/>
    <property type="match status" value="1"/>
</dbReference>
<dbReference type="Pfam" id="PF00032">
    <property type="entry name" value="Cytochrom_B_C"/>
    <property type="match status" value="1"/>
</dbReference>
<dbReference type="Pfam" id="PF00033">
    <property type="entry name" value="Cytochrome_B"/>
    <property type="match status" value="1"/>
</dbReference>
<dbReference type="PIRSF" id="PIRSF038885">
    <property type="entry name" value="COB"/>
    <property type="match status" value="1"/>
</dbReference>
<dbReference type="SUPFAM" id="SSF81648">
    <property type="entry name" value="a domain/subunit of cytochrome bc1 complex (Ubiquinol-cytochrome c reductase)"/>
    <property type="match status" value="1"/>
</dbReference>
<dbReference type="SUPFAM" id="SSF81342">
    <property type="entry name" value="Transmembrane di-heme cytochromes"/>
    <property type="match status" value="1"/>
</dbReference>
<dbReference type="PROSITE" id="PS51003">
    <property type="entry name" value="CYTB_CTER"/>
    <property type="match status" value="1"/>
</dbReference>
<dbReference type="PROSITE" id="PS51002">
    <property type="entry name" value="CYTB_NTER"/>
    <property type="match status" value="1"/>
</dbReference>
<name>CYB_PERFS</name>
<sequence length="379" mass="42918">MTILRKSHPIMKMINHAFIDLPAPSNISGWWNFGSLLGVCLIIQISTGLFLSMHYTSDTMTAFSSVSHICRDVNYGWLIRYMHANGASLFFICLYFHIGRGIYYGSYLYKETWNIGIILLFLVMATAFMGYVLPWGQMSFWGATVITNLLSAVPYIGPDLVEWIWGGFSVDKATLSRFFAFHFILPFIIAAMAMVHLLFLHETGSNNPLGIPSDADKIPFHPYYSYKDLLGALMLLAFYLTIVLFFPDCMGDPDNYMPANPLNTPPHIKPEWYFLFAYAILRSIPNKLGGVIALILSILVLALFPLLHTSSQRSLMFRPISQVLFWLLVSDLFILTWIGGQPVEPPFIIIGQLASILYFSIILVLFPIAGLIENKLLKW</sequence>
<feature type="chain" id="PRO_0000255110" description="Cytochrome b">
    <location>
        <begin position="1"/>
        <end position="379"/>
    </location>
</feature>
<feature type="transmembrane region" description="Helical" evidence="2">
    <location>
        <begin position="33"/>
        <end position="53"/>
    </location>
</feature>
<feature type="transmembrane region" description="Helical" evidence="2">
    <location>
        <begin position="77"/>
        <end position="98"/>
    </location>
</feature>
<feature type="transmembrane region" description="Helical" evidence="2">
    <location>
        <begin position="113"/>
        <end position="133"/>
    </location>
</feature>
<feature type="transmembrane region" description="Helical" evidence="2">
    <location>
        <begin position="178"/>
        <end position="198"/>
    </location>
</feature>
<feature type="transmembrane region" description="Helical" evidence="2">
    <location>
        <begin position="226"/>
        <end position="246"/>
    </location>
</feature>
<feature type="transmembrane region" description="Helical" evidence="2">
    <location>
        <begin position="288"/>
        <end position="308"/>
    </location>
</feature>
<feature type="transmembrane region" description="Helical" evidence="2">
    <location>
        <begin position="320"/>
        <end position="340"/>
    </location>
</feature>
<feature type="transmembrane region" description="Helical" evidence="2">
    <location>
        <begin position="347"/>
        <end position="367"/>
    </location>
</feature>
<feature type="binding site" description="axial binding residue" evidence="2">
    <location>
        <position position="83"/>
    </location>
    <ligand>
        <name>heme b</name>
        <dbReference type="ChEBI" id="CHEBI:60344"/>
        <label>b562</label>
    </ligand>
    <ligandPart>
        <name>Fe</name>
        <dbReference type="ChEBI" id="CHEBI:18248"/>
    </ligandPart>
</feature>
<feature type="binding site" description="axial binding residue" evidence="2">
    <location>
        <position position="97"/>
    </location>
    <ligand>
        <name>heme b</name>
        <dbReference type="ChEBI" id="CHEBI:60344"/>
        <label>b566</label>
    </ligand>
    <ligandPart>
        <name>Fe</name>
        <dbReference type="ChEBI" id="CHEBI:18248"/>
    </ligandPart>
</feature>
<feature type="binding site" description="axial binding residue" evidence="2">
    <location>
        <position position="182"/>
    </location>
    <ligand>
        <name>heme b</name>
        <dbReference type="ChEBI" id="CHEBI:60344"/>
        <label>b562</label>
    </ligand>
    <ligandPart>
        <name>Fe</name>
        <dbReference type="ChEBI" id="CHEBI:18248"/>
    </ligandPart>
</feature>
<feature type="binding site" description="axial binding residue" evidence="2">
    <location>
        <position position="196"/>
    </location>
    <ligand>
        <name>heme b</name>
        <dbReference type="ChEBI" id="CHEBI:60344"/>
        <label>b566</label>
    </ligand>
    <ligandPart>
        <name>Fe</name>
        <dbReference type="ChEBI" id="CHEBI:18248"/>
    </ligandPart>
</feature>
<feature type="binding site" evidence="2">
    <location>
        <position position="201"/>
    </location>
    <ligand>
        <name>a ubiquinone</name>
        <dbReference type="ChEBI" id="CHEBI:16389"/>
    </ligand>
</feature>
<comment type="function">
    <text evidence="2">Component of the ubiquinol-cytochrome c reductase complex (complex III or cytochrome b-c1 complex) that is part of the mitochondrial respiratory chain. The b-c1 complex mediates electron transfer from ubiquinol to cytochrome c. Contributes to the generation of a proton gradient across the mitochondrial membrane that is then used for ATP synthesis.</text>
</comment>
<comment type="cofactor">
    <cofactor evidence="2">
        <name>heme b</name>
        <dbReference type="ChEBI" id="CHEBI:60344"/>
    </cofactor>
    <text evidence="2">Binds 2 heme b groups non-covalently.</text>
</comment>
<comment type="subunit">
    <text evidence="2">The cytochrome bc1 complex contains 11 subunits: 3 respiratory subunits (MT-CYB, CYC1 and UQCRFS1), 2 core proteins (UQCRC1 and UQCRC2) and 6 low-molecular weight proteins (UQCRH/QCR6, UQCRB/QCR7, UQCRQ/QCR8, UQCR10/QCR9, UQCR11/QCR10 and a cleavage product of UQCRFS1). This cytochrome bc1 complex then forms a dimer.</text>
</comment>
<comment type="subcellular location">
    <subcellularLocation>
        <location evidence="2">Mitochondrion inner membrane</location>
        <topology evidence="2">Multi-pass membrane protein</topology>
    </subcellularLocation>
</comment>
<comment type="miscellaneous">
    <text evidence="1">Heme 1 (or BL or b562) is low-potential and absorbs at about 562 nm, and heme 2 (or BH or b566) is high-potential and absorbs at about 566 nm.</text>
</comment>
<comment type="similarity">
    <text evidence="3 4">Belongs to the cytochrome b family.</text>
</comment>
<comment type="caution">
    <text evidence="2">The full-length protein contains only eight transmembrane helices, not nine as predicted by bioinformatics tools.</text>
</comment>
<protein>
    <recommendedName>
        <fullName>Cytochrome b</fullName>
    </recommendedName>
    <alternativeName>
        <fullName>Complex III subunit 3</fullName>
    </alternativeName>
    <alternativeName>
        <fullName>Complex III subunit III</fullName>
    </alternativeName>
    <alternativeName>
        <fullName>Cytochrome b-c1 complex subunit 3</fullName>
    </alternativeName>
    <alternativeName>
        <fullName>Ubiquinol-cytochrome-c reductase complex cytochrome b subunit</fullName>
    </alternativeName>
</protein>
<accession>Q508J3</accession>
<organism>
    <name type="scientific">Perognathus fasciatus</name>
    <name type="common">Olive-backed pocket mouse</name>
    <dbReference type="NCBI Taxonomy" id="38677"/>
    <lineage>
        <taxon>Eukaryota</taxon>
        <taxon>Metazoa</taxon>
        <taxon>Chordata</taxon>
        <taxon>Craniata</taxon>
        <taxon>Vertebrata</taxon>
        <taxon>Euteleostomi</taxon>
        <taxon>Mammalia</taxon>
        <taxon>Eutheria</taxon>
        <taxon>Euarchontoglires</taxon>
        <taxon>Glires</taxon>
        <taxon>Rodentia</taxon>
        <taxon>Castorimorpha</taxon>
        <taxon>Heteromyidae</taxon>
        <taxon>Perognathinae</taxon>
        <taxon>Perognathus</taxon>
    </lineage>
</organism>
<reference key="1">
    <citation type="journal article" date="2005" name="J. Mammal.">
        <title>Phylogenetics of the new world rodent family Heteromyidae.</title>
        <authorList>
            <person name="Alexander L.F."/>
            <person name="Riddle B.R."/>
        </authorList>
    </citation>
    <scope>NUCLEOTIDE SEQUENCE [GENOMIC DNA]</scope>
    <source>
        <strain>Isolate LVT 2525</strain>
    </source>
</reference>
<gene>
    <name type="primary">MT-CYB</name>
    <name type="synonym">COB</name>
    <name type="synonym">CYTB</name>
    <name type="synonym">MTCYB</name>
</gene>
<geneLocation type="mitochondrion"/>
<keyword id="KW-0249">Electron transport</keyword>
<keyword id="KW-0349">Heme</keyword>
<keyword id="KW-0408">Iron</keyword>
<keyword id="KW-0472">Membrane</keyword>
<keyword id="KW-0479">Metal-binding</keyword>
<keyword id="KW-0496">Mitochondrion</keyword>
<keyword id="KW-0999">Mitochondrion inner membrane</keyword>
<keyword id="KW-0679">Respiratory chain</keyword>
<keyword id="KW-0812">Transmembrane</keyword>
<keyword id="KW-1133">Transmembrane helix</keyword>
<keyword id="KW-0813">Transport</keyword>
<keyword id="KW-0830">Ubiquinone</keyword>
<evidence type="ECO:0000250" key="1"/>
<evidence type="ECO:0000250" key="2">
    <source>
        <dbReference type="UniProtKB" id="P00157"/>
    </source>
</evidence>
<evidence type="ECO:0000255" key="3">
    <source>
        <dbReference type="PROSITE-ProRule" id="PRU00967"/>
    </source>
</evidence>
<evidence type="ECO:0000255" key="4">
    <source>
        <dbReference type="PROSITE-ProRule" id="PRU00968"/>
    </source>
</evidence>
<proteinExistence type="inferred from homology"/>